<name>RECF_BEUC1</name>
<comment type="function">
    <text evidence="1">The RecF protein is involved in DNA metabolism; it is required for DNA replication and normal SOS inducibility. RecF binds preferentially to single-stranded, linear DNA. It also seems to bind ATP.</text>
</comment>
<comment type="subcellular location">
    <subcellularLocation>
        <location evidence="1">Cytoplasm</location>
    </subcellularLocation>
</comment>
<comment type="similarity">
    <text evidence="1">Belongs to the RecF family.</text>
</comment>
<sequence>MYVSDLALTDFRSYADLVIGLEPGITAFVGPNGQGKTNLVEAIGYLGTFSSHRVSGDAALVRWGAERAVVRAKVVRRARPTLVELEIVAGRANRARVDRSPVSRVREAAGIARSVIFAPEDLALVKGDPDGRRRFLDDLLVQLSPRLAGVRSEYERVLRQRTALLKSAGPARRRSGDGEPAALRTLDVWDGHLARAGAELVAARVRLVQDLRPHVGATYEQVSAAQSEARISYRASVEEARPDDAPTEVVESVETELTRADLVEARLLEAMARLRTREIERGVSLVGPHRDDLVLTLADMPAKGYASHGESWSYALALRLASYALLRDDGEAGGGGEPVLVLDDVFAELDARRRTRLASIVASAEQVLVTAAVAEDVPEELEGARMDVMGGEVLRVR</sequence>
<proteinExistence type="inferred from homology"/>
<accession>C5BUP6</accession>
<dbReference type="EMBL" id="CP001618">
    <property type="protein sequence ID" value="ACQ78270.1"/>
    <property type="molecule type" value="Genomic_DNA"/>
</dbReference>
<dbReference type="RefSeq" id="WP_012725050.1">
    <property type="nucleotide sequence ID" value="NC_012669.1"/>
</dbReference>
<dbReference type="SMR" id="C5BUP6"/>
<dbReference type="STRING" id="471853.Bcav_0004"/>
<dbReference type="KEGG" id="bcv:Bcav_0004"/>
<dbReference type="eggNOG" id="COG1195">
    <property type="taxonomic scope" value="Bacteria"/>
</dbReference>
<dbReference type="HOGENOM" id="CLU_040267_1_1_11"/>
<dbReference type="OrthoDB" id="9803889at2"/>
<dbReference type="Proteomes" id="UP000007962">
    <property type="component" value="Chromosome"/>
</dbReference>
<dbReference type="GO" id="GO:0005737">
    <property type="term" value="C:cytoplasm"/>
    <property type="evidence" value="ECO:0007669"/>
    <property type="project" value="UniProtKB-SubCell"/>
</dbReference>
<dbReference type="GO" id="GO:0005524">
    <property type="term" value="F:ATP binding"/>
    <property type="evidence" value="ECO:0007669"/>
    <property type="project" value="UniProtKB-UniRule"/>
</dbReference>
<dbReference type="GO" id="GO:0003697">
    <property type="term" value="F:single-stranded DNA binding"/>
    <property type="evidence" value="ECO:0007669"/>
    <property type="project" value="UniProtKB-UniRule"/>
</dbReference>
<dbReference type="GO" id="GO:0006260">
    <property type="term" value="P:DNA replication"/>
    <property type="evidence" value="ECO:0007669"/>
    <property type="project" value="UniProtKB-UniRule"/>
</dbReference>
<dbReference type="GO" id="GO:0000731">
    <property type="term" value="P:DNA synthesis involved in DNA repair"/>
    <property type="evidence" value="ECO:0007669"/>
    <property type="project" value="TreeGrafter"/>
</dbReference>
<dbReference type="GO" id="GO:0006302">
    <property type="term" value="P:double-strand break repair"/>
    <property type="evidence" value="ECO:0007669"/>
    <property type="project" value="TreeGrafter"/>
</dbReference>
<dbReference type="GO" id="GO:0009432">
    <property type="term" value="P:SOS response"/>
    <property type="evidence" value="ECO:0007669"/>
    <property type="project" value="UniProtKB-UniRule"/>
</dbReference>
<dbReference type="Gene3D" id="3.40.50.300">
    <property type="entry name" value="P-loop containing nucleotide triphosphate hydrolases"/>
    <property type="match status" value="1"/>
</dbReference>
<dbReference type="Gene3D" id="1.20.1050.90">
    <property type="entry name" value="RecF/RecN/SMC, N-terminal domain"/>
    <property type="match status" value="1"/>
</dbReference>
<dbReference type="HAMAP" id="MF_00365">
    <property type="entry name" value="RecF"/>
    <property type="match status" value="1"/>
</dbReference>
<dbReference type="InterPro" id="IPR001238">
    <property type="entry name" value="DNA-binding_RecF"/>
</dbReference>
<dbReference type="InterPro" id="IPR018078">
    <property type="entry name" value="DNA-binding_RecF_CS"/>
</dbReference>
<dbReference type="InterPro" id="IPR027417">
    <property type="entry name" value="P-loop_NTPase"/>
</dbReference>
<dbReference type="InterPro" id="IPR003395">
    <property type="entry name" value="RecF/RecN/SMC_N"/>
</dbReference>
<dbReference type="InterPro" id="IPR042174">
    <property type="entry name" value="RecF_2"/>
</dbReference>
<dbReference type="NCBIfam" id="TIGR00611">
    <property type="entry name" value="recf"/>
    <property type="match status" value="1"/>
</dbReference>
<dbReference type="PANTHER" id="PTHR32182">
    <property type="entry name" value="DNA REPLICATION AND REPAIR PROTEIN RECF"/>
    <property type="match status" value="1"/>
</dbReference>
<dbReference type="PANTHER" id="PTHR32182:SF0">
    <property type="entry name" value="DNA REPLICATION AND REPAIR PROTEIN RECF"/>
    <property type="match status" value="1"/>
</dbReference>
<dbReference type="Pfam" id="PF02463">
    <property type="entry name" value="SMC_N"/>
    <property type="match status" value="1"/>
</dbReference>
<dbReference type="SUPFAM" id="SSF52540">
    <property type="entry name" value="P-loop containing nucleoside triphosphate hydrolases"/>
    <property type="match status" value="1"/>
</dbReference>
<dbReference type="PROSITE" id="PS00617">
    <property type="entry name" value="RECF_1"/>
    <property type="match status" value="1"/>
</dbReference>
<dbReference type="PROSITE" id="PS00618">
    <property type="entry name" value="RECF_2"/>
    <property type="match status" value="1"/>
</dbReference>
<reference key="1">
    <citation type="journal article" date="2009" name="Stand. Genomic Sci.">
        <title>Complete genome sequence of Beutenbergia cavernae type strain (HKI 0122).</title>
        <authorList>
            <person name="Land M."/>
            <person name="Pukall R."/>
            <person name="Abt B."/>
            <person name="Goker M."/>
            <person name="Rohde M."/>
            <person name="Glavina Del Rio T."/>
            <person name="Tice H."/>
            <person name="Copeland A."/>
            <person name="Cheng J.F."/>
            <person name="Lucas S."/>
            <person name="Chen F."/>
            <person name="Nolan M."/>
            <person name="Bruce D."/>
            <person name="Goodwin L."/>
            <person name="Pitluck S."/>
            <person name="Ivanova N."/>
            <person name="Mavromatis K."/>
            <person name="Ovchinnikova G."/>
            <person name="Pati A."/>
            <person name="Chen A."/>
            <person name="Palaniappan K."/>
            <person name="Hauser L."/>
            <person name="Chang Y.J."/>
            <person name="Jefferies C.C."/>
            <person name="Saunders E."/>
            <person name="Brettin T."/>
            <person name="Detter J.C."/>
            <person name="Han C."/>
            <person name="Chain P."/>
            <person name="Bristow J."/>
            <person name="Eisen J.A."/>
            <person name="Markowitz V."/>
            <person name="Hugenholtz P."/>
            <person name="Kyrpides N.C."/>
            <person name="Klenk H.P."/>
            <person name="Lapidus A."/>
        </authorList>
    </citation>
    <scope>NUCLEOTIDE SEQUENCE [LARGE SCALE GENOMIC DNA]</scope>
    <source>
        <strain>ATCC BAA-8 / DSM 12333 / CCUG 43141 / JCM 11478 / NBRC 16432 / NCIMB 13614 / HKI 0122</strain>
    </source>
</reference>
<evidence type="ECO:0000255" key="1">
    <source>
        <dbReference type="HAMAP-Rule" id="MF_00365"/>
    </source>
</evidence>
<keyword id="KW-0067">ATP-binding</keyword>
<keyword id="KW-0963">Cytoplasm</keyword>
<keyword id="KW-0227">DNA damage</keyword>
<keyword id="KW-0234">DNA repair</keyword>
<keyword id="KW-0235">DNA replication</keyword>
<keyword id="KW-0238">DNA-binding</keyword>
<keyword id="KW-0547">Nucleotide-binding</keyword>
<keyword id="KW-1185">Reference proteome</keyword>
<keyword id="KW-0742">SOS response</keyword>
<protein>
    <recommendedName>
        <fullName evidence="1">DNA replication and repair protein RecF</fullName>
    </recommendedName>
</protein>
<gene>
    <name evidence="1" type="primary">recF</name>
    <name type="ordered locus">Bcav_0004</name>
</gene>
<feature type="chain" id="PRO_1000205472" description="DNA replication and repair protein RecF">
    <location>
        <begin position="1"/>
        <end position="397"/>
    </location>
</feature>
<feature type="binding site" evidence="1">
    <location>
        <begin position="30"/>
        <end position="37"/>
    </location>
    <ligand>
        <name>ATP</name>
        <dbReference type="ChEBI" id="CHEBI:30616"/>
    </ligand>
</feature>
<organism>
    <name type="scientific">Beutenbergia cavernae (strain ATCC BAA-8 / DSM 12333 / CCUG 43141 / JCM 11478 / NBRC 16432 / NCIMB 13614 / HKI 0122)</name>
    <dbReference type="NCBI Taxonomy" id="471853"/>
    <lineage>
        <taxon>Bacteria</taxon>
        <taxon>Bacillati</taxon>
        <taxon>Actinomycetota</taxon>
        <taxon>Actinomycetes</taxon>
        <taxon>Micrococcales</taxon>
        <taxon>Beutenbergiaceae</taxon>
        <taxon>Beutenbergia</taxon>
    </lineage>
</organism>